<reference key="1">
    <citation type="journal article" date="2004" name="Proc. Natl. Acad. Sci. U.S.A.">
        <title>Complete genomes of two clinical Staphylococcus aureus strains: evidence for the rapid evolution of virulence and drug resistance.</title>
        <authorList>
            <person name="Holden M.T.G."/>
            <person name="Feil E.J."/>
            <person name="Lindsay J.A."/>
            <person name="Peacock S.J."/>
            <person name="Day N.P.J."/>
            <person name="Enright M.C."/>
            <person name="Foster T.J."/>
            <person name="Moore C.E."/>
            <person name="Hurst L."/>
            <person name="Atkin R."/>
            <person name="Barron A."/>
            <person name="Bason N."/>
            <person name="Bentley S.D."/>
            <person name="Chillingworth C."/>
            <person name="Chillingworth T."/>
            <person name="Churcher C."/>
            <person name="Clark L."/>
            <person name="Corton C."/>
            <person name="Cronin A."/>
            <person name="Doggett J."/>
            <person name="Dowd L."/>
            <person name="Feltwell T."/>
            <person name="Hance Z."/>
            <person name="Harris B."/>
            <person name="Hauser H."/>
            <person name="Holroyd S."/>
            <person name="Jagels K."/>
            <person name="James K.D."/>
            <person name="Lennard N."/>
            <person name="Line A."/>
            <person name="Mayes R."/>
            <person name="Moule S."/>
            <person name="Mungall K."/>
            <person name="Ormond D."/>
            <person name="Quail M.A."/>
            <person name="Rabbinowitsch E."/>
            <person name="Rutherford K.M."/>
            <person name="Sanders M."/>
            <person name="Sharp S."/>
            <person name="Simmonds M."/>
            <person name="Stevens K."/>
            <person name="Whitehead S."/>
            <person name="Barrell B.G."/>
            <person name="Spratt B.G."/>
            <person name="Parkhill J."/>
        </authorList>
    </citation>
    <scope>NUCLEOTIDE SEQUENCE [LARGE SCALE GENOMIC DNA]</scope>
    <source>
        <strain>MRSA252</strain>
    </source>
</reference>
<reference key="2">
    <citation type="journal article" date="2010" name="Proteins">
        <title>Structural insights into Staphylococcus aureus enoyl-ACP reductase (FabI), in complex with NADP and triclosan.</title>
        <authorList>
            <person name="Priyadarshi A."/>
            <person name="Kim E.E."/>
            <person name="Hwang K.Y."/>
        </authorList>
    </citation>
    <scope>X-RAY CRYSTALLOGRAPHY (2.28 ANGSTROMS) IN COMPLEX WITH NADP AND INHIBITOR</scope>
    <scope>SUBUNIT</scope>
</reference>
<dbReference type="EC" id="1.3.1.39"/>
<dbReference type="EMBL" id="BX571856">
    <property type="protein sequence ID" value="CAG39983.1"/>
    <property type="molecule type" value="Genomic_DNA"/>
</dbReference>
<dbReference type="RefSeq" id="WP_000933195.1">
    <property type="nucleotide sequence ID" value="NC_002952.2"/>
</dbReference>
<dbReference type="PDB" id="3GNS">
    <property type="method" value="X-ray"/>
    <property type="resolution" value="2.71 A"/>
    <property type="chains" value="A=1-256"/>
</dbReference>
<dbReference type="PDB" id="3GNT">
    <property type="method" value="X-ray"/>
    <property type="resolution" value="2.75 A"/>
    <property type="chains" value="A/B=1-256"/>
</dbReference>
<dbReference type="PDB" id="3GR6">
    <property type="method" value="X-ray"/>
    <property type="resolution" value="2.28 A"/>
    <property type="chains" value="A/D/G/J=1-256"/>
</dbReference>
<dbReference type="PDB" id="4FS3">
    <property type="method" value="X-ray"/>
    <property type="resolution" value="1.80 A"/>
    <property type="chains" value="A=1-256"/>
</dbReference>
<dbReference type="PDBsum" id="3GNS"/>
<dbReference type="PDBsum" id="3GNT"/>
<dbReference type="PDBsum" id="3GR6"/>
<dbReference type="PDBsum" id="4FS3"/>
<dbReference type="SMR" id="Q6GI75"/>
<dbReference type="BindingDB" id="Q6GI75"/>
<dbReference type="ChEMBL" id="CHEMBL3994"/>
<dbReference type="DrugBank" id="DB11155">
    <property type="generic name" value="Triclocarban"/>
</dbReference>
<dbReference type="DrugBank" id="DB08604">
    <property type="generic name" value="Triclosan"/>
</dbReference>
<dbReference type="DrugCentral" id="Q6GI75"/>
<dbReference type="KEGG" id="sar:SAR0978"/>
<dbReference type="HOGENOM" id="CLU_010194_10_1_9"/>
<dbReference type="BRENDA" id="1.3.1.39">
    <property type="organism ID" value="3352"/>
</dbReference>
<dbReference type="UniPathway" id="UPA00094"/>
<dbReference type="EvolutionaryTrace" id="Q6GI75"/>
<dbReference type="Proteomes" id="UP000000596">
    <property type="component" value="Chromosome"/>
</dbReference>
<dbReference type="GO" id="GO:0004318">
    <property type="term" value="F:enoyl-[acyl-carrier-protein] reductase (NADH) activity"/>
    <property type="evidence" value="ECO:0000250"/>
    <property type="project" value="UniProtKB"/>
</dbReference>
<dbReference type="GO" id="GO:0141148">
    <property type="term" value="F:enoyl-[acyl-carrier-protein] reductase (NADPH) activity"/>
    <property type="evidence" value="ECO:0007669"/>
    <property type="project" value="UniProtKB-EC"/>
</dbReference>
<dbReference type="GO" id="GO:0042802">
    <property type="term" value="F:identical protein binding"/>
    <property type="evidence" value="ECO:0000353"/>
    <property type="project" value="UniProtKB"/>
</dbReference>
<dbReference type="GO" id="GO:0050661">
    <property type="term" value="F:NADP binding"/>
    <property type="evidence" value="ECO:0000314"/>
    <property type="project" value="UniProtKB"/>
</dbReference>
<dbReference type="GO" id="GO:0030497">
    <property type="term" value="P:fatty acid elongation"/>
    <property type="evidence" value="ECO:0000250"/>
    <property type="project" value="UniProtKB"/>
</dbReference>
<dbReference type="CDD" id="cd05372">
    <property type="entry name" value="ENR_SDR"/>
    <property type="match status" value="1"/>
</dbReference>
<dbReference type="FunFam" id="1.10.8.400:FF:000001">
    <property type="entry name" value="Enoyl-[acyl-carrier-protein] reductase [NADH]"/>
    <property type="match status" value="1"/>
</dbReference>
<dbReference type="FunFam" id="3.40.50.720:FF:000169">
    <property type="entry name" value="Enoyl-[acyl-carrier-protein] reductase [NADH]"/>
    <property type="match status" value="1"/>
</dbReference>
<dbReference type="Gene3D" id="1.10.8.400">
    <property type="entry name" value="Enoyl acyl carrier protein reductase"/>
    <property type="match status" value="1"/>
</dbReference>
<dbReference type="Gene3D" id="3.40.50.720">
    <property type="entry name" value="NAD(P)-binding Rossmann-like Domain"/>
    <property type="match status" value="1"/>
</dbReference>
<dbReference type="InterPro" id="IPR014358">
    <property type="entry name" value="Enoyl-ACP_Rdtase_NADH"/>
</dbReference>
<dbReference type="InterPro" id="IPR036291">
    <property type="entry name" value="NAD(P)-bd_dom_sf"/>
</dbReference>
<dbReference type="InterPro" id="IPR002347">
    <property type="entry name" value="SDR_fam"/>
</dbReference>
<dbReference type="NCBIfam" id="NF006369">
    <property type="entry name" value="PRK08594.1"/>
    <property type="match status" value="1"/>
</dbReference>
<dbReference type="PANTHER" id="PTHR43159">
    <property type="entry name" value="ENOYL-[ACYL-CARRIER-PROTEIN] REDUCTASE"/>
    <property type="match status" value="1"/>
</dbReference>
<dbReference type="PANTHER" id="PTHR43159:SF2">
    <property type="entry name" value="ENOYL-[ACYL-CARRIER-PROTEIN] REDUCTASE [NADH], CHLOROPLASTIC"/>
    <property type="match status" value="1"/>
</dbReference>
<dbReference type="Pfam" id="PF13561">
    <property type="entry name" value="adh_short_C2"/>
    <property type="match status" value="1"/>
</dbReference>
<dbReference type="PIRSF" id="PIRSF000094">
    <property type="entry name" value="Enoyl-ACP_rdct"/>
    <property type="match status" value="1"/>
</dbReference>
<dbReference type="PRINTS" id="PR00081">
    <property type="entry name" value="GDHRDH"/>
</dbReference>
<dbReference type="SUPFAM" id="SSF51735">
    <property type="entry name" value="NAD(P)-binding Rossmann-fold domains"/>
    <property type="match status" value="1"/>
</dbReference>
<name>FABI_STAAR</name>
<proteinExistence type="evidence at protein level"/>
<accession>Q6GI75</accession>
<keyword id="KW-0002">3D-structure</keyword>
<keyword id="KW-0275">Fatty acid biosynthesis</keyword>
<keyword id="KW-0276">Fatty acid metabolism</keyword>
<keyword id="KW-0444">Lipid biosynthesis</keyword>
<keyword id="KW-0443">Lipid metabolism</keyword>
<keyword id="KW-0520">NAD</keyword>
<keyword id="KW-0521">NADP</keyword>
<keyword id="KW-0547">Nucleotide-binding</keyword>
<keyword id="KW-0560">Oxidoreductase</keyword>
<gene>
    <name type="primary">fabI</name>
    <name type="ordered locus">SAR0978</name>
</gene>
<organism>
    <name type="scientific">Staphylococcus aureus (strain MRSA252)</name>
    <dbReference type="NCBI Taxonomy" id="282458"/>
    <lineage>
        <taxon>Bacteria</taxon>
        <taxon>Bacillati</taxon>
        <taxon>Bacillota</taxon>
        <taxon>Bacilli</taxon>
        <taxon>Bacillales</taxon>
        <taxon>Staphylococcaceae</taxon>
        <taxon>Staphylococcus</taxon>
    </lineage>
</organism>
<protein>
    <recommendedName>
        <fullName>Enoyl-[acyl-carrier-protein] reductase [NADPH] FabI</fullName>
        <shortName>ENR</shortName>
        <ecNumber>1.3.1.39</ecNumber>
    </recommendedName>
    <alternativeName>
        <fullName>NADPH-dependent enoyl-ACP reductase</fullName>
    </alternativeName>
</protein>
<sequence length="256" mass="27992">MLNLENKTYVIMGIANKRSIAFGVAKVLDQLGAKLVFTYRKERSRKELEKLLEQLNQPEAHLYQIDVQSDEEVINGFEQIGKDVGNIDGVYHSIAFANMEDLRGRFSETSREGFLLAQDISSYSLTIVAHEAKKLMPEGGSIVATTYLGGEFAVQNYNVMGVAKASLEANVKYLALDLGPDNIRVNAISAGPIRTLSAKGVGGFNTILKEIEERAPLKRNVDQVEVGKTAAYLLSDLSSGVTGENIHVDSGFHAIK</sequence>
<comment type="function">
    <text evidence="1">Catalyzes the reduction of a carbon-carbon double bond in an enoyl moiety that is covalently linked to an acyl carrier protein (ACP). Involved in the elongation cycle of fatty acid which are used in the lipid metabolism (By similarity).</text>
</comment>
<comment type="catalytic activity">
    <reaction>
        <text>a 2,3-saturated acyl-[ACP] + NADP(+) = a (2E)-enoyl-[ACP] + NADPH + H(+)</text>
        <dbReference type="Rhea" id="RHEA:22564"/>
        <dbReference type="Rhea" id="RHEA-COMP:9925"/>
        <dbReference type="Rhea" id="RHEA-COMP:9926"/>
        <dbReference type="ChEBI" id="CHEBI:15378"/>
        <dbReference type="ChEBI" id="CHEBI:57783"/>
        <dbReference type="ChEBI" id="CHEBI:58349"/>
        <dbReference type="ChEBI" id="CHEBI:78784"/>
        <dbReference type="ChEBI" id="CHEBI:78785"/>
        <dbReference type="EC" id="1.3.1.39"/>
    </reaction>
</comment>
<comment type="pathway">
    <text>Lipid metabolism; fatty acid biosynthesis.</text>
</comment>
<comment type="subunit">
    <text evidence="2">Homotetramer.</text>
</comment>
<comment type="similarity">
    <text evidence="3">Belongs to the short-chain dehydrogenases/reductases (SDR) family. FabI subfamily.</text>
</comment>
<feature type="chain" id="PRO_0000407979" description="Enoyl-[acyl-carrier-protein] reductase [NADPH] FabI">
    <location>
        <begin position="1"/>
        <end position="256"/>
    </location>
</feature>
<feature type="active site" description="Proton acceptor" evidence="1">
    <location>
        <position position="147"/>
    </location>
</feature>
<feature type="active site" description="Proton acceptor" evidence="1">
    <location>
        <position position="157"/>
    </location>
</feature>
<feature type="binding site" evidence="2">
    <location>
        <position position="13"/>
    </location>
    <ligand>
        <name>NADP(+)</name>
        <dbReference type="ChEBI" id="CHEBI:58349"/>
    </ligand>
</feature>
<feature type="binding site" evidence="2">
    <location>
        <begin position="19"/>
        <end position="20"/>
    </location>
    <ligand>
        <name>NADP(+)</name>
        <dbReference type="ChEBI" id="CHEBI:58349"/>
    </ligand>
</feature>
<feature type="binding site" evidence="2">
    <location>
        <begin position="40"/>
        <end position="44"/>
    </location>
    <ligand>
        <name>NADP(+)</name>
        <dbReference type="ChEBI" id="CHEBI:58349"/>
    </ligand>
</feature>
<feature type="binding site" evidence="2">
    <location>
        <begin position="66"/>
        <end position="67"/>
    </location>
    <ligand>
        <name>NADP(+)</name>
        <dbReference type="ChEBI" id="CHEBI:58349"/>
    </ligand>
</feature>
<feature type="binding site" evidence="2">
    <location>
        <position position="94"/>
    </location>
    <ligand>
        <name>NADP(+)</name>
        <dbReference type="ChEBI" id="CHEBI:58349"/>
    </ligand>
</feature>
<feature type="binding site" evidence="1">
    <location>
        <position position="97"/>
    </location>
    <ligand>
        <name>substrate</name>
    </ligand>
</feature>
<feature type="binding site" evidence="2">
    <location>
        <position position="164"/>
    </location>
    <ligand>
        <name>NADP(+)</name>
        <dbReference type="ChEBI" id="CHEBI:58349"/>
    </ligand>
</feature>
<feature type="binding site" evidence="2">
    <location>
        <begin position="193"/>
        <end position="197"/>
    </location>
    <ligand>
        <name>NADP(+)</name>
        <dbReference type="ChEBI" id="CHEBI:58349"/>
    </ligand>
</feature>
<feature type="site" description="Critical for cofactor specificity" evidence="1">
    <location>
        <position position="40"/>
    </location>
</feature>
<feature type="site" description="Critical for cofactor specificity" evidence="1">
    <location>
        <position position="41"/>
    </location>
</feature>
<feature type="strand" evidence="5">
    <location>
        <begin position="8"/>
        <end position="12"/>
    </location>
</feature>
<feature type="strand" evidence="4">
    <location>
        <begin position="16"/>
        <end position="18"/>
    </location>
</feature>
<feature type="helix" evidence="5">
    <location>
        <begin position="20"/>
        <end position="30"/>
    </location>
</feature>
<feature type="strand" evidence="5">
    <location>
        <begin position="34"/>
        <end position="41"/>
    </location>
</feature>
<feature type="helix" evidence="5">
    <location>
        <begin position="42"/>
        <end position="44"/>
    </location>
</feature>
<feature type="helix" evidence="5">
    <location>
        <begin position="45"/>
        <end position="52"/>
    </location>
</feature>
<feature type="helix" evidence="5">
    <location>
        <begin position="53"/>
        <end position="55"/>
    </location>
</feature>
<feature type="strand" evidence="5">
    <location>
        <begin position="61"/>
        <end position="64"/>
    </location>
</feature>
<feature type="helix" evidence="5">
    <location>
        <begin position="70"/>
        <end position="84"/>
    </location>
</feature>
<feature type="strand" evidence="5">
    <location>
        <begin position="88"/>
        <end position="92"/>
    </location>
</feature>
<feature type="helix" evidence="5">
    <location>
        <begin position="99"/>
        <end position="102"/>
    </location>
</feature>
<feature type="helix" evidence="5">
    <location>
        <begin position="106"/>
        <end position="108"/>
    </location>
</feature>
<feature type="helix" evidence="5">
    <location>
        <begin position="111"/>
        <end position="121"/>
    </location>
</feature>
<feature type="helix" evidence="5">
    <location>
        <begin position="123"/>
        <end position="133"/>
    </location>
</feature>
<feature type="strand" evidence="5">
    <location>
        <begin position="140"/>
        <end position="146"/>
    </location>
</feature>
<feature type="helix" evidence="5">
    <location>
        <begin position="148"/>
        <end position="150"/>
    </location>
</feature>
<feature type="turn" evidence="5">
    <location>
        <begin position="155"/>
        <end position="157"/>
    </location>
</feature>
<feature type="helix" evidence="5">
    <location>
        <begin position="158"/>
        <end position="178"/>
    </location>
</feature>
<feature type="helix" evidence="5">
    <location>
        <begin position="179"/>
        <end position="181"/>
    </location>
</feature>
<feature type="strand" evidence="5">
    <location>
        <begin position="183"/>
        <end position="190"/>
    </location>
</feature>
<feature type="helix" evidence="5">
    <location>
        <begin position="196"/>
        <end position="198"/>
    </location>
</feature>
<feature type="helix" evidence="5">
    <location>
        <begin position="204"/>
        <end position="214"/>
    </location>
</feature>
<feature type="helix" evidence="5">
    <location>
        <begin position="223"/>
        <end position="234"/>
    </location>
</feature>
<feature type="helix" evidence="5">
    <location>
        <begin position="236"/>
        <end position="238"/>
    </location>
</feature>
<feature type="strand" evidence="5">
    <location>
        <begin position="245"/>
        <end position="249"/>
    </location>
</feature>
<feature type="helix" evidence="5">
    <location>
        <begin position="252"/>
        <end position="254"/>
    </location>
</feature>
<evidence type="ECO:0000250" key="1"/>
<evidence type="ECO:0000269" key="2">
    <source>
    </source>
</evidence>
<evidence type="ECO:0000305" key="3"/>
<evidence type="ECO:0007829" key="4">
    <source>
        <dbReference type="PDB" id="3GNS"/>
    </source>
</evidence>
<evidence type="ECO:0007829" key="5">
    <source>
        <dbReference type="PDB" id="4FS3"/>
    </source>
</evidence>